<evidence type="ECO:0000255" key="1">
    <source>
        <dbReference type="HAMAP-Rule" id="MF_03112"/>
    </source>
</evidence>
<reference key="1">
    <citation type="journal article" date="2002" name="Nature">
        <title>Genome sequence and comparative analysis of the model rodent malaria parasite Plasmodium yoelii yoelii.</title>
        <authorList>
            <person name="Carlton J.M."/>
            <person name="Angiuoli S.V."/>
            <person name="Suh B.B."/>
            <person name="Kooij T.W."/>
            <person name="Pertea M."/>
            <person name="Silva J.C."/>
            <person name="Ermolaeva M.D."/>
            <person name="Allen J.E."/>
            <person name="Selengut J.D."/>
            <person name="Koo H.L."/>
            <person name="Peterson J.D."/>
            <person name="Pop M."/>
            <person name="Kosack D.S."/>
            <person name="Shumway M.F."/>
            <person name="Bidwell S.L."/>
            <person name="Shallom S.J."/>
            <person name="van Aken S.E."/>
            <person name="Riedmuller S.B."/>
            <person name="Feldblyum T.V."/>
            <person name="Cho J.K."/>
            <person name="Quackenbush J."/>
            <person name="Sedegah M."/>
            <person name="Shoaibi A."/>
            <person name="Cummings L.M."/>
            <person name="Florens L."/>
            <person name="Yates J.R. III"/>
            <person name="Raine J.D."/>
            <person name="Sinden R.E."/>
            <person name="Harris M.A."/>
            <person name="Cunningham D.A."/>
            <person name="Preiser P.R."/>
            <person name="Bergman L.W."/>
            <person name="Vaidya A.B."/>
            <person name="van Lin L.H."/>
            <person name="Janse C.J."/>
            <person name="Waters A.P."/>
            <person name="Smith H.O."/>
            <person name="White O.R."/>
            <person name="Salzberg S.L."/>
            <person name="Venter J.C."/>
            <person name="Fraser C.M."/>
            <person name="Hoffman S.L."/>
            <person name="Gardner M.J."/>
            <person name="Carucci D.J."/>
        </authorList>
    </citation>
    <scope>NUCLEOTIDE SEQUENCE [LARGE SCALE GENOMIC DNA]</scope>
    <source>
        <strain>17XNL</strain>
    </source>
</reference>
<name>ASNA_PLAYO</name>
<gene>
    <name type="ORF">PY02198</name>
</gene>
<feature type="chain" id="PRO_0000388174" description="ATPase ASNA1 homolog">
    <location>
        <begin position="1"/>
        <end position="380"/>
    </location>
</feature>
<feature type="active site" evidence="1">
    <location>
        <position position="77"/>
    </location>
</feature>
<feature type="binding site" evidence="1">
    <location>
        <begin position="48"/>
        <end position="55"/>
    </location>
    <ligand>
        <name>ATP</name>
        <dbReference type="ChEBI" id="CHEBI:30616"/>
    </ligand>
</feature>
<feature type="binding site" evidence="1">
    <location>
        <position position="248"/>
    </location>
    <ligand>
        <name>ATP</name>
        <dbReference type="ChEBI" id="CHEBI:30616"/>
    </ligand>
</feature>
<feature type="binding site" evidence="1">
    <location>
        <position position="275"/>
    </location>
    <ligand>
        <name>ATP</name>
        <dbReference type="ChEBI" id="CHEBI:30616"/>
    </ligand>
</feature>
<organism>
    <name type="scientific">Plasmodium yoelii yoelii</name>
    <dbReference type="NCBI Taxonomy" id="73239"/>
    <lineage>
        <taxon>Eukaryota</taxon>
        <taxon>Sar</taxon>
        <taxon>Alveolata</taxon>
        <taxon>Apicomplexa</taxon>
        <taxon>Aconoidasida</taxon>
        <taxon>Haemosporida</taxon>
        <taxon>Plasmodiidae</taxon>
        <taxon>Plasmodium</taxon>
        <taxon>Plasmodium (Vinckeia)</taxon>
    </lineage>
</organism>
<protein>
    <recommendedName>
        <fullName evidence="1">ATPase ASNA1 homolog</fullName>
        <ecNumber evidence="1">3.6.-.-</ecNumber>
    </recommendedName>
    <alternativeName>
        <fullName evidence="1">Arsenical pump-driving ATPase homolog</fullName>
    </alternativeName>
    <alternativeName>
        <fullName evidence="1">Arsenite-stimulated ATPase</fullName>
    </alternativeName>
</protein>
<sequence>MSEGGSDVSSLSCSLSLDSDSCEDEFYETNLNKLIENTSLNWIFVGGKGGVGKTTTSCSIAIQLAKKRESVLLLSTDPAHNTSDAFNQKFTNKPTLINSFDNLYCMEIDTTFSEDTAFKINQSNFLNSIIPELLQSFPGIDEALCFAELMQSIKNMKYSVIVFDTAPTGHTLRLLAFPDLLKKALGYLINLKEKLKGTLNMLQSLTNNEMEFEGMYDKINHLNTMSISIQENFQNPLKTTFVCVCIPEFLSVYETERLIQELTKKNISCYNIVVNQVVFPLICPDANIEKCENLLKQIKDTNIQDSFNTLILKAKELEDVYISRRKLQSKYLTQIKNLYGNYFHIVCMPQLKTEIRGLDKISNFSEMLLQSKDIPIYSPQ</sequence>
<keyword id="KW-0067">ATP-binding</keyword>
<keyword id="KW-0963">Cytoplasm</keyword>
<keyword id="KW-0256">Endoplasmic reticulum</keyword>
<keyword id="KW-0378">Hydrolase</keyword>
<keyword id="KW-0547">Nucleotide-binding</keyword>
<keyword id="KW-1185">Reference proteome</keyword>
<keyword id="KW-0813">Transport</keyword>
<dbReference type="EC" id="3.6.-.-" evidence="1"/>
<dbReference type="EMBL" id="AABL01000603">
    <property type="protein sequence ID" value="EAA21631.1"/>
    <property type="molecule type" value="Genomic_DNA"/>
</dbReference>
<dbReference type="SMR" id="Q7RMI2"/>
<dbReference type="FunCoup" id="Q7RMI2">
    <property type="interactions" value="450"/>
</dbReference>
<dbReference type="STRING" id="73239.Q7RMI2"/>
<dbReference type="PaxDb" id="73239-Q7RMI2"/>
<dbReference type="EnsemblProtists" id="EAA21631">
    <property type="protein sequence ID" value="EAA21631"/>
    <property type="gene ID" value="EAA21631"/>
</dbReference>
<dbReference type="KEGG" id="pyo:PY17X_0717200"/>
<dbReference type="VEuPathDB" id="PlasmoDB:Py17XNL_000704258"/>
<dbReference type="InParanoid" id="Q7RMI2"/>
<dbReference type="Proteomes" id="UP000008553">
    <property type="component" value="Unassembled WGS sequence"/>
</dbReference>
<dbReference type="GO" id="GO:0043529">
    <property type="term" value="C:GET complex"/>
    <property type="evidence" value="ECO:0007669"/>
    <property type="project" value="TreeGrafter"/>
</dbReference>
<dbReference type="GO" id="GO:0005524">
    <property type="term" value="F:ATP binding"/>
    <property type="evidence" value="ECO:0007669"/>
    <property type="project" value="UniProtKB-UniRule"/>
</dbReference>
<dbReference type="GO" id="GO:0016887">
    <property type="term" value="F:ATP hydrolysis activity"/>
    <property type="evidence" value="ECO:0007669"/>
    <property type="project" value="InterPro"/>
</dbReference>
<dbReference type="GO" id="GO:0071816">
    <property type="term" value="P:tail-anchored membrane protein insertion into ER membrane"/>
    <property type="evidence" value="ECO:0007669"/>
    <property type="project" value="TreeGrafter"/>
</dbReference>
<dbReference type="CDD" id="cd02035">
    <property type="entry name" value="ArsA"/>
    <property type="match status" value="1"/>
</dbReference>
<dbReference type="FunFam" id="3.40.50.300:FF:001459">
    <property type="entry name" value="ATPase ASNA1 homolog"/>
    <property type="match status" value="1"/>
</dbReference>
<dbReference type="Gene3D" id="3.40.50.300">
    <property type="entry name" value="P-loop containing nucleotide triphosphate hydrolases"/>
    <property type="match status" value="1"/>
</dbReference>
<dbReference type="HAMAP" id="MF_03112">
    <property type="entry name" value="Asna1_Get3"/>
    <property type="match status" value="1"/>
</dbReference>
<dbReference type="InterPro" id="IPR025723">
    <property type="entry name" value="Anion-transp_ATPase-like_dom"/>
</dbReference>
<dbReference type="InterPro" id="IPR016300">
    <property type="entry name" value="ATPase_ArsA/GET3"/>
</dbReference>
<dbReference type="InterPro" id="IPR027542">
    <property type="entry name" value="ATPase_ArsA/GET3_euk"/>
</dbReference>
<dbReference type="InterPro" id="IPR027417">
    <property type="entry name" value="P-loop_NTPase"/>
</dbReference>
<dbReference type="NCBIfam" id="TIGR00345">
    <property type="entry name" value="GET3_arsA_TRC40"/>
    <property type="match status" value="1"/>
</dbReference>
<dbReference type="PANTHER" id="PTHR10803">
    <property type="entry name" value="ARSENICAL PUMP-DRIVING ATPASE ARSENITE-TRANSLOCATING ATPASE"/>
    <property type="match status" value="1"/>
</dbReference>
<dbReference type="PANTHER" id="PTHR10803:SF3">
    <property type="entry name" value="ATPASE GET3"/>
    <property type="match status" value="1"/>
</dbReference>
<dbReference type="Pfam" id="PF02374">
    <property type="entry name" value="ArsA_ATPase"/>
    <property type="match status" value="2"/>
</dbReference>
<dbReference type="SUPFAM" id="SSF52540">
    <property type="entry name" value="P-loop containing nucleoside triphosphate hydrolases"/>
    <property type="match status" value="1"/>
</dbReference>
<comment type="function">
    <text evidence="1">ATPase required for the post-translational delivery of tail-anchored (TA) proteins to the endoplasmic reticulum. Recognizes and selectively binds the transmembrane domain of TA proteins in the cytosol. This complex then targets to the endoplasmic reticulum by membrane-bound receptors, where the tail-anchored protein is released for insertion. This process is regulated by ATP binding and hydrolysis. ATP binding drives the homodimer towards the closed dimer state, facilitating recognition of newly synthesized TA membrane proteins. ATP hydrolysis is required for insertion. Subsequently, the homodimer reverts towards the open dimer state, lowering its affinity for the membrane-bound receptor, and returning it to the cytosol to initiate a new round of targeting.</text>
</comment>
<comment type="subunit">
    <text evidence="1">Homodimer.</text>
</comment>
<comment type="subcellular location">
    <subcellularLocation>
        <location evidence="1">Cytoplasm</location>
    </subcellularLocation>
    <subcellularLocation>
        <location evidence="1">Endoplasmic reticulum</location>
    </subcellularLocation>
</comment>
<comment type="similarity">
    <text evidence="1">Belongs to the arsA ATPase family.</text>
</comment>
<accession>Q7RMI2</accession>
<proteinExistence type="inferred from homology"/>